<evidence type="ECO:0000255" key="1">
    <source>
        <dbReference type="HAMAP-Rule" id="MF_00166"/>
    </source>
</evidence>
<dbReference type="EMBL" id="CP001600">
    <property type="protein sequence ID" value="ACR70642.1"/>
    <property type="molecule type" value="Genomic_DNA"/>
</dbReference>
<dbReference type="RefSeq" id="WP_000462905.1">
    <property type="nucleotide sequence ID" value="NZ_CP169062.1"/>
</dbReference>
<dbReference type="SMR" id="C5BEX0"/>
<dbReference type="STRING" id="67780.B6E78_09150"/>
<dbReference type="GeneID" id="98390389"/>
<dbReference type="KEGG" id="eic:NT01EI_3506"/>
<dbReference type="HOGENOM" id="CLU_158040_3_0_6"/>
<dbReference type="OrthoDB" id="9802388at2"/>
<dbReference type="Proteomes" id="UP000001485">
    <property type="component" value="Chromosome"/>
</dbReference>
<dbReference type="GO" id="GO:0003700">
    <property type="term" value="F:DNA-binding transcription factor activity"/>
    <property type="evidence" value="ECO:0007669"/>
    <property type="project" value="UniProtKB-UniRule"/>
</dbReference>
<dbReference type="GO" id="GO:0043565">
    <property type="term" value="F:sequence-specific DNA binding"/>
    <property type="evidence" value="ECO:0007669"/>
    <property type="project" value="InterPro"/>
</dbReference>
<dbReference type="FunFam" id="1.10.10.60:FF:000006">
    <property type="entry name" value="DNA-binding protein Fis"/>
    <property type="match status" value="1"/>
</dbReference>
<dbReference type="Gene3D" id="1.10.10.60">
    <property type="entry name" value="Homeodomain-like"/>
    <property type="match status" value="1"/>
</dbReference>
<dbReference type="HAMAP" id="MF_00166">
    <property type="entry name" value="DNA_binding_Fis"/>
    <property type="match status" value="1"/>
</dbReference>
<dbReference type="InterPro" id="IPR005412">
    <property type="entry name" value="Fis_DNA-bd"/>
</dbReference>
<dbReference type="InterPro" id="IPR009057">
    <property type="entry name" value="Homeodomain-like_sf"/>
</dbReference>
<dbReference type="InterPro" id="IPR002197">
    <property type="entry name" value="HTH_Fis"/>
</dbReference>
<dbReference type="InterPro" id="IPR050207">
    <property type="entry name" value="Trans_regulatory_Fis"/>
</dbReference>
<dbReference type="NCBIfam" id="NF001659">
    <property type="entry name" value="PRK00430.1"/>
    <property type="match status" value="1"/>
</dbReference>
<dbReference type="PANTHER" id="PTHR47918">
    <property type="entry name" value="DNA-BINDING PROTEIN FIS"/>
    <property type="match status" value="1"/>
</dbReference>
<dbReference type="PANTHER" id="PTHR47918:SF1">
    <property type="entry name" value="DNA-BINDING PROTEIN FIS"/>
    <property type="match status" value="1"/>
</dbReference>
<dbReference type="Pfam" id="PF02954">
    <property type="entry name" value="HTH_8"/>
    <property type="match status" value="1"/>
</dbReference>
<dbReference type="PIRSF" id="PIRSF002097">
    <property type="entry name" value="DNA-binding_Fis"/>
    <property type="match status" value="1"/>
</dbReference>
<dbReference type="PRINTS" id="PR01591">
    <property type="entry name" value="DNABINDNGFIS"/>
</dbReference>
<dbReference type="PRINTS" id="PR01590">
    <property type="entry name" value="HTHFIS"/>
</dbReference>
<dbReference type="SUPFAM" id="SSF46689">
    <property type="entry name" value="Homeodomain-like"/>
    <property type="match status" value="1"/>
</dbReference>
<comment type="function">
    <text evidence="1">Activates ribosomal RNA transcription. Plays a direct role in upstream activation of rRNA promoters.</text>
</comment>
<comment type="subunit">
    <text evidence="1">Homodimer.</text>
</comment>
<comment type="similarity">
    <text evidence="1">Belongs to the transcriptional regulatory Fis family.</text>
</comment>
<name>FIS_EDWI9</name>
<protein>
    <recommendedName>
        <fullName evidence="1">DNA-binding protein Fis</fullName>
    </recommendedName>
</protein>
<feature type="chain" id="PRO_1000203633" description="DNA-binding protein Fis">
    <location>
        <begin position="1"/>
        <end position="98"/>
    </location>
</feature>
<feature type="DNA-binding region" description="H-T-H motif" evidence="1">
    <location>
        <begin position="74"/>
        <end position="93"/>
    </location>
</feature>
<reference key="1">
    <citation type="submission" date="2009-03" db="EMBL/GenBank/DDBJ databases">
        <title>Complete genome sequence of Edwardsiella ictaluri 93-146.</title>
        <authorList>
            <person name="Williams M.L."/>
            <person name="Gillaspy A.F."/>
            <person name="Dyer D.W."/>
            <person name="Thune R.L."/>
            <person name="Waldbieser G.C."/>
            <person name="Schuster S.C."/>
            <person name="Gipson J."/>
            <person name="Zaitshik J."/>
            <person name="Landry C."/>
            <person name="Lawrence M.L."/>
        </authorList>
    </citation>
    <scope>NUCLEOTIDE SEQUENCE [LARGE SCALE GENOMIC DNA]</scope>
    <source>
        <strain>93-146</strain>
    </source>
</reference>
<sequence>MFEQRVNSDVLTVSTVNSQDQVTQKPLRDSVKQALKNYFAQLNGQDVNDLYELVLAEVEQPLLDMVMQYTRGNQTRAALMMGINRGTLRKKLKKYGMN</sequence>
<keyword id="KW-0010">Activator</keyword>
<keyword id="KW-0238">DNA-binding</keyword>
<keyword id="KW-0804">Transcription</keyword>
<keyword id="KW-0805">Transcription regulation</keyword>
<gene>
    <name evidence="1" type="primary">fis</name>
    <name type="ordered locus">NT01EI_3506</name>
</gene>
<organism>
    <name type="scientific">Edwardsiella ictaluri (strain 93-146)</name>
    <dbReference type="NCBI Taxonomy" id="634503"/>
    <lineage>
        <taxon>Bacteria</taxon>
        <taxon>Pseudomonadati</taxon>
        <taxon>Pseudomonadota</taxon>
        <taxon>Gammaproteobacteria</taxon>
        <taxon>Enterobacterales</taxon>
        <taxon>Hafniaceae</taxon>
        <taxon>Edwardsiella</taxon>
    </lineage>
</organism>
<proteinExistence type="inferred from homology"/>
<accession>C5BEX0</accession>